<comment type="function">
    <text evidence="1">Catalyzes the transfer of acetyl from acetyl-CoA to desacetylmycothiol (Cys-GlcN-Ins) to form mycothiol.</text>
</comment>
<comment type="catalytic activity">
    <reaction evidence="1">
        <text>1D-myo-inositol 2-(L-cysteinylamino)-2-deoxy-alpha-D-glucopyranoside + acetyl-CoA = mycothiol + CoA + H(+)</text>
        <dbReference type="Rhea" id="RHEA:26172"/>
        <dbReference type="ChEBI" id="CHEBI:15378"/>
        <dbReference type="ChEBI" id="CHEBI:16768"/>
        <dbReference type="ChEBI" id="CHEBI:57287"/>
        <dbReference type="ChEBI" id="CHEBI:57288"/>
        <dbReference type="ChEBI" id="CHEBI:58887"/>
        <dbReference type="EC" id="2.3.1.189"/>
    </reaction>
</comment>
<comment type="subunit">
    <text evidence="1">Monomer.</text>
</comment>
<comment type="similarity">
    <text evidence="1">Belongs to the acetyltransferase family. MshD subfamily.</text>
</comment>
<organism>
    <name type="scientific">Mycobacterium tuberculosis (strain KZN 1435 / MDR)</name>
    <dbReference type="NCBI Taxonomy" id="478434"/>
    <lineage>
        <taxon>Bacteria</taxon>
        <taxon>Bacillati</taxon>
        <taxon>Actinomycetota</taxon>
        <taxon>Actinomycetes</taxon>
        <taxon>Mycobacteriales</taxon>
        <taxon>Mycobacteriaceae</taxon>
        <taxon>Mycobacterium</taxon>
        <taxon>Mycobacterium tuberculosis complex</taxon>
    </lineage>
</organism>
<reference key="1">
    <citation type="submission" date="2009-07" db="EMBL/GenBank/DDBJ databases">
        <title>The genome sequence of Mycobacterium tuberculosis strain KZN 1435.</title>
        <authorList>
            <person name="Murray M."/>
            <person name="Pillay M."/>
            <person name="Borowsky M.L."/>
            <person name="Young S.K."/>
            <person name="Zeng Q."/>
            <person name="Koehrsen M."/>
            <person name="Alvarado L."/>
            <person name="Berlin A.M."/>
            <person name="Borenstein D."/>
            <person name="Chen Z."/>
            <person name="Engels R."/>
            <person name="Freedman E."/>
            <person name="Gellesch M."/>
            <person name="Goldberg J."/>
            <person name="Griggs A."/>
            <person name="Gujja S."/>
            <person name="Heiman D.I."/>
            <person name="Hepburn T.A."/>
            <person name="Howarth C."/>
            <person name="Jen D."/>
            <person name="Larson L."/>
            <person name="Lewis B."/>
            <person name="Mehta T."/>
            <person name="Park D."/>
            <person name="Pearson M."/>
            <person name="Roberts A."/>
            <person name="Saif S."/>
            <person name="Shea T.D."/>
            <person name="Shenoy N."/>
            <person name="Sisk P."/>
            <person name="Stolte C."/>
            <person name="Sykes S.N."/>
            <person name="Walk T."/>
            <person name="White J."/>
            <person name="Yandava C."/>
            <person name="Haas B."/>
            <person name="Nusbaum C."/>
            <person name="Galagan J."/>
            <person name="Birren B."/>
        </authorList>
    </citation>
    <scope>NUCLEOTIDE SEQUENCE [LARGE SCALE GENOMIC DNA]</scope>
    <source>
        <strain>KZN 1435 / MDR</strain>
    </source>
</reference>
<proteinExistence type="inferred from homology"/>
<gene>
    <name evidence="1" type="primary">mshD</name>
    <name type="ordered locus">TBMG_00833</name>
</gene>
<protein>
    <recommendedName>
        <fullName evidence="1">Mycothiol acetyltransferase</fullName>
        <shortName evidence="1">MSH acetyltransferase</shortName>
        <ecNumber evidence="1">2.3.1.189</ecNumber>
    </recommendedName>
    <alternativeName>
        <fullName evidence="1">Mycothiol synthase</fullName>
    </alternativeName>
</protein>
<evidence type="ECO:0000255" key="1">
    <source>
        <dbReference type="HAMAP-Rule" id="MF_01698"/>
    </source>
</evidence>
<name>MSHD_MYCTK</name>
<feature type="chain" id="PRO_0000400281" description="Mycothiol acetyltransferase">
    <location>
        <begin position="1"/>
        <end position="315"/>
    </location>
</feature>
<feature type="domain" description="N-acetyltransferase 1" evidence="1">
    <location>
        <begin position="4"/>
        <end position="141"/>
    </location>
</feature>
<feature type="domain" description="N-acetyltransferase 2" evidence="1">
    <location>
        <begin position="152"/>
        <end position="315"/>
    </location>
</feature>
<feature type="binding site" evidence="1">
    <location>
        <position position="36"/>
    </location>
    <ligand>
        <name>1D-myo-inositol 2-(L-cysteinylamino)-2-deoxy-alpha-D-glucopyranoside</name>
        <dbReference type="ChEBI" id="CHEBI:58887"/>
    </ligand>
</feature>
<feature type="binding site" evidence="1">
    <location>
        <begin position="80"/>
        <end position="82"/>
    </location>
    <ligand>
        <name>acetyl-CoA</name>
        <dbReference type="ChEBI" id="CHEBI:57288"/>
        <label>1</label>
    </ligand>
</feature>
<feature type="binding site" evidence="1">
    <location>
        <begin position="88"/>
        <end position="93"/>
    </location>
    <ligand>
        <name>acetyl-CoA</name>
        <dbReference type="ChEBI" id="CHEBI:57288"/>
        <label>1</label>
    </ligand>
</feature>
<feature type="binding site" evidence="1">
    <location>
        <position position="179"/>
    </location>
    <ligand>
        <name>1D-myo-inositol 2-(L-cysteinylamino)-2-deoxy-alpha-D-glucopyranoside</name>
        <dbReference type="ChEBI" id="CHEBI:58887"/>
    </ligand>
</feature>
<feature type="binding site" evidence="1">
    <location>
        <position position="224"/>
    </location>
    <ligand>
        <name>1D-myo-inositol 2-(L-cysteinylamino)-2-deoxy-alpha-D-glucopyranoside</name>
        <dbReference type="ChEBI" id="CHEBI:58887"/>
    </ligand>
</feature>
<feature type="binding site" evidence="1">
    <location>
        <position position="234"/>
    </location>
    <ligand>
        <name>1D-myo-inositol 2-(L-cysteinylamino)-2-deoxy-alpha-D-glucopyranoside</name>
        <dbReference type="ChEBI" id="CHEBI:58887"/>
    </ligand>
</feature>
<feature type="binding site" evidence="1">
    <location>
        <begin position="238"/>
        <end position="240"/>
    </location>
    <ligand>
        <name>acetyl-CoA</name>
        <dbReference type="ChEBI" id="CHEBI:57288"/>
        <label>2</label>
    </ligand>
</feature>
<feature type="binding site" evidence="1">
    <location>
        <begin position="245"/>
        <end position="251"/>
    </location>
    <ligand>
        <name>acetyl-CoA</name>
        <dbReference type="ChEBI" id="CHEBI:57288"/>
        <label>2</label>
    </ligand>
</feature>
<feature type="binding site" evidence="1">
    <location>
        <position position="282"/>
    </location>
    <ligand>
        <name>1D-myo-inositol 2-(L-cysteinylamino)-2-deoxy-alpha-D-glucopyranoside</name>
        <dbReference type="ChEBI" id="CHEBI:58887"/>
    </ligand>
</feature>
<feature type="binding site" evidence="1">
    <location>
        <begin position="287"/>
        <end position="292"/>
    </location>
    <ligand>
        <name>acetyl-CoA</name>
        <dbReference type="ChEBI" id="CHEBI:57288"/>
        <label>2</label>
    </ligand>
</feature>
<keyword id="KW-0012">Acyltransferase</keyword>
<keyword id="KW-0677">Repeat</keyword>
<keyword id="KW-0808">Transferase</keyword>
<sequence>MTALDWRSALTADEQRSVRALVTATTAVDGVAPVGEQVLRELGQQRTEHLLVAGSRPGGPIIGYLNLSPPRGAGGAMAELVVHPQSRRRGIGTAMARAALAKTAGRNQFWAHGTLDPARATASALGLVGVRELIQMRRPLRDIPEPTIPDGVVIRTYAGTSDDAELLRVNNAAFAGHPEQGGWTAVQLAERRGEAWFDPDGLILAFGDSPRERPGRLLGFHWTKVHPDHPGLGEVYVLGVDPAAQRRGLGQMLTSIGIVSLARRLGGRKTLDPAVEPAVLLYVESDNVAAVRTYQSLGFTTYSVDTAYALAGTDN</sequence>
<accession>C6DVC4</accession>
<dbReference type="EC" id="2.3.1.189" evidence="1"/>
<dbReference type="EMBL" id="CP001658">
    <property type="protein sequence ID" value="ACT23872.1"/>
    <property type="molecule type" value="Genomic_DNA"/>
</dbReference>
<dbReference type="RefSeq" id="WP_003404307.1">
    <property type="nucleotide sequence ID" value="NZ_KK341220.1"/>
</dbReference>
<dbReference type="SMR" id="C6DVC4"/>
<dbReference type="KEGG" id="mtb:TBMG_00833"/>
<dbReference type="PATRIC" id="fig|478434.13.peg.3383"/>
<dbReference type="HOGENOM" id="CLU_068014_0_0_11"/>
<dbReference type="GO" id="GO:0035447">
    <property type="term" value="F:mycothiol synthase activity"/>
    <property type="evidence" value="ECO:0007669"/>
    <property type="project" value="UniProtKB-UniRule"/>
</dbReference>
<dbReference type="GO" id="GO:0008999">
    <property type="term" value="F:protein-N-terminal-alanine acetyltransferase activity"/>
    <property type="evidence" value="ECO:0007669"/>
    <property type="project" value="TreeGrafter"/>
</dbReference>
<dbReference type="GO" id="GO:0010125">
    <property type="term" value="P:mycothiol biosynthetic process"/>
    <property type="evidence" value="ECO:0007669"/>
    <property type="project" value="UniProtKB-UniRule"/>
</dbReference>
<dbReference type="CDD" id="cd04301">
    <property type="entry name" value="NAT_SF"/>
    <property type="match status" value="2"/>
</dbReference>
<dbReference type="FunFam" id="3.40.630.30:FF:000089">
    <property type="entry name" value="Mycothiol acetyltransferase"/>
    <property type="match status" value="1"/>
</dbReference>
<dbReference type="Gene3D" id="3.40.630.30">
    <property type="match status" value="1"/>
</dbReference>
<dbReference type="HAMAP" id="MF_01698">
    <property type="entry name" value="MshD"/>
    <property type="match status" value="1"/>
</dbReference>
<dbReference type="InterPro" id="IPR016181">
    <property type="entry name" value="Acyl_CoA_acyltransferase"/>
</dbReference>
<dbReference type="InterPro" id="IPR000182">
    <property type="entry name" value="GNAT_dom"/>
</dbReference>
<dbReference type="InterPro" id="IPR050276">
    <property type="entry name" value="MshD_Acetyltransferase"/>
</dbReference>
<dbReference type="InterPro" id="IPR017813">
    <property type="entry name" value="Mycothiol_AcTrfase"/>
</dbReference>
<dbReference type="NCBIfam" id="TIGR03448">
    <property type="entry name" value="mycothiol_MshD"/>
    <property type="match status" value="1"/>
</dbReference>
<dbReference type="PANTHER" id="PTHR43617">
    <property type="entry name" value="L-AMINO ACID N-ACETYLTRANSFERASE"/>
    <property type="match status" value="1"/>
</dbReference>
<dbReference type="PANTHER" id="PTHR43617:SF31">
    <property type="entry name" value="MYCOTHIOL ACETYLTRANSFERASE"/>
    <property type="match status" value="1"/>
</dbReference>
<dbReference type="Pfam" id="PF00583">
    <property type="entry name" value="Acetyltransf_1"/>
    <property type="match status" value="2"/>
</dbReference>
<dbReference type="PIRSF" id="PIRSF021524">
    <property type="entry name" value="MSH_acetyltransferase"/>
    <property type="match status" value="1"/>
</dbReference>
<dbReference type="SUPFAM" id="SSF55729">
    <property type="entry name" value="Acyl-CoA N-acyltransferases (Nat)"/>
    <property type="match status" value="1"/>
</dbReference>
<dbReference type="PROSITE" id="PS51186">
    <property type="entry name" value="GNAT"/>
    <property type="match status" value="2"/>
</dbReference>